<comment type="similarity">
    <text evidence="1">Belongs to the UPF0337 (CsbD) family.</text>
</comment>
<proteinExistence type="inferred from homology"/>
<protein>
    <recommendedName>
        <fullName>UPF0337 protein YjbJ</fullName>
    </recommendedName>
</protein>
<accession>P68207</accession>
<accession>P32691</accession>
<feature type="chain" id="PRO_0000210000" description="UPF0337 protein YjbJ">
    <location>
        <begin position="1"/>
        <end position="69"/>
    </location>
</feature>
<keyword id="KW-1185">Reference proteome</keyword>
<organism>
    <name type="scientific">Escherichia coli O157:H7</name>
    <dbReference type="NCBI Taxonomy" id="83334"/>
    <lineage>
        <taxon>Bacteria</taxon>
        <taxon>Pseudomonadati</taxon>
        <taxon>Pseudomonadota</taxon>
        <taxon>Gammaproteobacteria</taxon>
        <taxon>Enterobacterales</taxon>
        <taxon>Enterobacteriaceae</taxon>
        <taxon>Escherichia</taxon>
    </lineage>
</organism>
<evidence type="ECO:0000305" key="1"/>
<reference key="1">
    <citation type="journal article" date="2001" name="Nature">
        <title>Genome sequence of enterohaemorrhagic Escherichia coli O157:H7.</title>
        <authorList>
            <person name="Perna N.T."/>
            <person name="Plunkett G. III"/>
            <person name="Burland V."/>
            <person name="Mau B."/>
            <person name="Glasner J.D."/>
            <person name="Rose D.J."/>
            <person name="Mayhew G.F."/>
            <person name="Evans P.S."/>
            <person name="Gregor J."/>
            <person name="Kirkpatrick H.A."/>
            <person name="Posfai G."/>
            <person name="Hackett J."/>
            <person name="Klink S."/>
            <person name="Boutin A."/>
            <person name="Shao Y."/>
            <person name="Miller L."/>
            <person name="Grotbeck E.J."/>
            <person name="Davis N.W."/>
            <person name="Lim A."/>
            <person name="Dimalanta E.T."/>
            <person name="Potamousis K."/>
            <person name="Apodaca J."/>
            <person name="Anantharaman T.S."/>
            <person name="Lin J."/>
            <person name="Yen G."/>
            <person name="Schwartz D.C."/>
            <person name="Welch R.A."/>
            <person name="Blattner F.R."/>
        </authorList>
    </citation>
    <scope>NUCLEOTIDE SEQUENCE [LARGE SCALE GENOMIC DNA]</scope>
    <source>
        <strain>O157:H7 / EDL933 / ATCC 700927 / EHEC</strain>
    </source>
</reference>
<reference key="2">
    <citation type="journal article" date="2001" name="DNA Res.">
        <title>Complete genome sequence of enterohemorrhagic Escherichia coli O157:H7 and genomic comparison with a laboratory strain K-12.</title>
        <authorList>
            <person name="Hayashi T."/>
            <person name="Makino K."/>
            <person name="Ohnishi M."/>
            <person name="Kurokawa K."/>
            <person name="Ishii K."/>
            <person name="Yokoyama K."/>
            <person name="Han C.-G."/>
            <person name="Ohtsubo E."/>
            <person name="Nakayama K."/>
            <person name="Murata T."/>
            <person name="Tanaka M."/>
            <person name="Tobe T."/>
            <person name="Iida T."/>
            <person name="Takami H."/>
            <person name="Honda T."/>
            <person name="Sasakawa C."/>
            <person name="Ogasawara N."/>
            <person name="Yasunaga T."/>
            <person name="Kuhara S."/>
            <person name="Shiba T."/>
            <person name="Hattori M."/>
            <person name="Shinagawa H."/>
        </authorList>
    </citation>
    <scope>NUCLEOTIDE SEQUENCE [LARGE SCALE GENOMIC DNA]</scope>
    <source>
        <strain>O157:H7 / Sakai / RIMD 0509952 / EHEC</strain>
    </source>
</reference>
<sequence length="69" mass="8325">MNKDEAGGNWKQFKGKVKEQWGKLTDDDMTIIEGKRDQLVGKIQERYGYQKDQAEKEVVDWETRNEYRW</sequence>
<gene>
    <name type="primary">yjbJ</name>
    <name type="ordered locus">Z5644</name>
    <name type="ordered locus">ECs5028</name>
</gene>
<name>YJBJ_ECO57</name>
<dbReference type="EMBL" id="AE005174">
    <property type="protein sequence ID" value="AAG59244.1"/>
    <property type="molecule type" value="Genomic_DNA"/>
</dbReference>
<dbReference type="EMBL" id="BA000007">
    <property type="protein sequence ID" value="BAB38451.1"/>
    <property type="molecule type" value="Genomic_DNA"/>
</dbReference>
<dbReference type="PIR" id="D91257">
    <property type="entry name" value="D91257"/>
</dbReference>
<dbReference type="PIR" id="H86097">
    <property type="entry name" value="H86097"/>
</dbReference>
<dbReference type="RefSeq" id="NP_313055.1">
    <property type="nucleotide sequence ID" value="NC_002695.1"/>
</dbReference>
<dbReference type="RefSeq" id="WP_001030593.1">
    <property type="nucleotide sequence ID" value="NZ_VOAI01000027.1"/>
</dbReference>
<dbReference type="BMRB" id="P68207"/>
<dbReference type="SMR" id="P68207"/>
<dbReference type="STRING" id="155864.Z5644"/>
<dbReference type="GeneID" id="914307"/>
<dbReference type="KEGG" id="ece:Z5644"/>
<dbReference type="KEGG" id="ecs:ECs_5028"/>
<dbReference type="PATRIC" id="fig|386585.9.peg.5251"/>
<dbReference type="eggNOG" id="COG3237">
    <property type="taxonomic scope" value="Bacteria"/>
</dbReference>
<dbReference type="HOGENOM" id="CLU_135567_4_1_6"/>
<dbReference type="OMA" id="WERDTRW"/>
<dbReference type="Proteomes" id="UP000000558">
    <property type="component" value="Chromosome"/>
</dbReference>
<dbReference type="Proteomes" id="UP000002519">
    <property type="component" value="Chromosome"/>
</dbReference>
<dbReference type="FunFam" id="1.10.1470.10:FF:000001">
    <property type="entry name" value="CsbD family protein"/>
    <property type="match status" value="1"/>
</dbReference>
<dbReference type="Gene3D" id="1.10.1470.10">
    <property type="entry name" value="YjbJ"/>
    <property type="match status" value="1"/>
</dbReference>
<dbReference type="InterPro" id="IPR008462">
    <property type="entry name" value="CsbD"/>
</dbReference>
<dbReference type="InterPro" id="IPR050423">
    <property type="entry name" value="UPF0337_stress_rsp"/>
</dbReference>
<dbReference type="InterPro" id="IPR026042">
    <property type="entry name" value="YjbJ"/>
</dbReference>
<dbReference type="InterPro" id="IPR036629">
    <property type="entry name" value="YjbJ_sf"/>
</dbReference>
<dbReference type="NCBIfam" id="NF007748">
    <property type="entry name" value="PRK10428.1"/>
    <property type="match status" value="1"/>
</dbReference>
<dbReference type="PANTHER" id="PTHR34977">
    <property type="entry name" value="UPF0337 PROTEIN YJBJ"/>
    <property type="match status" value="1"/>
</dbReference>
<dbReference type="PANTHER" id="PTHR34977:SF1">
    <property type="entry name" value="UPF0337 PROTEIN YJBJ"/>
    <property type="match status" value="1"/>
</dbReference>
<dbReference type="Pfam" id="PF05532">
    <property type="entry name" value="CsbD"/>
    <property type="match status" value="1"/>
</dbReference>
<dbReference type="PIRSF" id="PIRSF039008">
    <property type="entry name" value="YjbJ"/>
    <property type="match status" value="1"/>
</dbReference>
<dbReference type="SUPFAM" id="SSF69047">
    <property type="entry name" value="Hypothetical protein YjbJ"/>
    <property type="match status" value="1"/>
</dbReference>